<dbReference type="EC" id="2.7.1.148"/>
<dbReference type="EMBL" id="U62773">
    <property type="protein sequence ID" value="AAB49936.1"/>
    <property type="molecule type" value="Genomic_DNA"/>
</dbReference>
<dbReference type="EMBL" id="AF258339">
    <property type="protein sequence ID" value="AAF76143.1"/>
    <property type="status" value="ALT_INIT"/>
    <property type="molecule type" value="mRNA"/>
</dbReference>
<dbReference type="EMBL" id="AF263101">
    <property type="protein sequence ID" value="AAF87717.1"/>
    <property type="molecule type" value="mRNA"/>
</dbReference>
<dbReference type="PIR" id="T07419">
    <property type="entry name" value="T07419"/>
</dbReference>
<dbReference type="SMR" id="P93841"/>
<dbReference type="FunCoup" id="P93841">
    <property type="interactions" value="842"/>
</dbReference>
<dbReference type="STRING" id="4081.P93841"/>
<dbReference type="BindingDB" id="P93841"/>
<dbReference type="ChEMBL" id="CHEMBL2285352"/>
<dbReference type="PaxDb" id="4081-Solyc01g009010.2.1"/>
<dbReference type="eggNOG" id="ENOG502QT9C">
    <property type="taxonomic scope" value="Eukaryota"/>
</dbReference>
<dbReference type="InParanoid" id="P93841"/>
<dbReference type="BioCyc" id="MetaCyc:MONOMER-11959"/>
<dbReference type="BRENDA" id="2.7.1.148">
    <property type="organism ID" value="3101"/>
</dbReference>
<dbReference type="UniPathway" id="UPA00056">
    <property type="reaction ID" value="UER00094"/>
</dbReference>
<dbReference type="Proteomes" id="UP000004994">
    <property type="component" value="Unplaced"/>
</dbReference>
<dbReference type="ExpressionAtlas" id="P93841">
    <property type="expression patterns" value="baseline and differential"/>
</dbReference>
<dbReference type="GO" id="GO:0009507">
    <property type="term" value="C:chloroplast"/>
    <property type="evidence" value="ECO:0007669"/>
    <property type="project" value="UniProtKB-SubCell"/>
</dbReference>
<dbReference type="GO" id="GO:0009509">
    <property type="term" value="C:chromoplast"/>
    <property type="evidence" value="ECO:0007669"/>
    <property type="project" value="UniProtKB-SubCell"/>
</dbReference>
<dbReference type="GO" id="GO:0050515">
    <property type="term" value="F:4-(cytidine 5'-diphospho)-2-C-methyl-D-erythritol kinase activity"/>
    <property type="evidence" value="ECO:0000318"/>
    <property type="project" value="GO_Central"/>
</dbReference>
<dbReference type="GO" id="GO:0005524">
    <property type="term" value="F:ATP binding"/>
    <property type="evidence" value="ECO:0007669"/>
    <property type="project" value="UniProtKB-KW"/>
</dbReference>
<dbReference type="GO" id="GO:0019288">
    <property type="term" value="P:isopentenyl diphosphate biosynthetic process, methylerythritol 4-phosphate pathway"/>
    <property type="evidence" value="ECO:0007669"/>
    <property type="project" value="UniProtKB-UniPathway"/>
</dbReference>
<dbReference type="GO" id="GO:0016114">
    <property type="term" value="P:terpenoid biosynthetic process"/>
    <property type="evidence" value="ECO:0007669"/>
    <property type="project" value="InterPro"/>
</dbReference>
<dbReference type="FunFam" id="3.30.230.10:FF:000045">
    <property type="entry name" value="4-diphosphocytidyl-2-C-methyl-D-erythritol kinase, chloroplastic"/>
    <property type="match status" value="1"/>
</dbReference>
<dbReference type="FunFam" id="3.30.70.890:FF:000009">
    <property type="entry name" value="4-diphosphocytidyl-2-C-methyl-D-erythritol kinase, chloroplastic"/>
    <property type="match status" value="1"/>
</dbReference>
<dbReference type="Gene3D" id="3.30.230.10">
    <property type="match status" value="1"/>
</dbReference>
<dbReference type="Gene3D" id="3.30.70.890">
    <property type="entry name" value="GHMP kinase, C-terminal domain"/>
    <property type="match status" value="1"/>
</dbReference>
<dbReference type="HAMAP" id="MF_00061">
    <property type="entry name" value="IspE"/>
    <property type="match status" value="1"/>
</dbReference>
<dbReference type="InterPro" id="IPR013750">
    <property type="entry name" value="GHMP_kinase_C_dom"/>
</dbReference>
<dbReference type="InterPro" id="IPR036554">
    <property type="entry name" value="GHMP_kinase_C_sf"/>
</dbReference>
<dbReference type="InterPro" id="IPR006204">
    <property type="entry name" value="GHMP_kinase_N_dom"/>
</dbReference>
<dbReference type="InterPro" id="IPR004424">
    <property type="entry name" value="IspE"/>
</dbReference>
<dbReference type="InterPro" id="IPR020568">
    <property type="entry name" value="Ribosomal_Su5_D2-typ_SF"/>
</dbReference>
<dbReference type="InterPro" id="IPR014721">
    <property type="entry name" value="Ribsml_uS5_D2-typ_fold_subgr"/>
</dbReference>
<dbReference type="NCBIfam" id="TIGR00154">
    <property type="entry name" value="ispE"/>
    <property type="match status" value="1"/>
</dbReference>
<dbReference type="PANTHER" id="PTHR43527">
    <property type="entry name" value="4-DIPHOSPHOCYTIDYL-2-C-METHYL-D-ERYTHRITOL KINASE, CHLOROPLASTIC"/>
    <property type="match status" value="1"/>
</dbReference>
<dbReference type="PANTHER" id="PTHR43527:SF2">
    <property type="entry name" value="4-DIPHOSPHOCYTIDYL-2-C-METHYL-D-ERYTHRITOL KINASE, CHLOROPLASTIC"/>
    <property type="match status" value="1"/>
</dbReference>
<dbReference type="Pfam" id="PF08544">
    <property type="entry name" value="GHMP_kinases_C"/>
    <property type="match status" value="1"/>
</dbReference>
<dbReference type="Pfam" id="PF00288">
    <property type="entry name" value="GHMP_kinases_N"/>
    <property type="match status" value="1"/>
</dbReference>
<dbReference type="SUPFAM" id="SSF55060">
    <property type="entry name" value="GHMP Kinase, C-terminal domain"/>
    <property type="match status" value="1"/>
</dbReference>
<dbReference type="SUPFAM" id="SSF54211">
    <property type="entry name" value="Ribosomal protein S5 domain 2-like"/>
    <property type="match status" value="1"/>
</dbReference>
<name>ISPE_SOLLC</name>
<proteinExistence type="evidence at protein level"/>
<gene>
    <name type="primary">ISPE</name>
</gene>
<sequence>LWLPVIFFVVSNPKLILLKRVVFFQSWSNRPHGSSYFNKNIQFRRNSFVIVKASGSRTSKKQVEITYNPEEKFNKLADEVDREAGLSRLTLFSPCKINVFLRITSKRDDGYHDLASLFHVISLGDKIKFSLSPSKSKDRLSTNVAGVPLDERNLIIKALNLYRKKTGTDNYFWIHLDKKVPTGAGLGGGSSNAATTLWAANQFSGCVATEKELQEWSGEIGSDIPFFFSHGAAYCTGRGEVVQDIPSPIPFDIPMVLIKPQQACSTAEVYKRFQLDLSSKVDPLSLLEKISTSGISQDVCVNDLEPPAFEVLPSLKRLKQRVIAAGRGQYDAVFMSGSGSTIVGVGSPDPPQFVYDDEEYKDVFLSEASFITRPANEWYVEPVSGSTIGDQPEFSTSFDMS</sequence>
<reference key="1">
    <citation type="journal article" date="1997" name="Plant Mol. Biol.">
        <title>Chromoplast development in ripening tomato fruit: identification of cDNAs for chromoplast-targeted proteins and characterization of a cDNA encoding a plastid-localized low-molecular-weight heat shock protein.</title>
        <authorList>
            <person name="Lawrence S.D."/>
            <person name="Cline K."/>
            <person name="Moore G.A."/>
        </authorList>
    </citation>
    <scope>NUCLEOTIDE SEQUENCE [GENOMIC DNA]</scope>
</reference>
<reference key="2">
    <citation type="journal article" date="2000" name="Proc. Natl. Acad. Sci. U.S.A.">
        <title>Biosynthesis of terpenoids: 4-diphosphocytidyl-2-C-methyl-D-erythritol kinase from tomato.</title>
        <authorList>
            <person name="Rohdich F."/>
            <person name="Wungsintaweekul J."/>
            <person name="Luettgen H."/>
            <person name="Fischer M."/>
            <person name="Eisenreich W."/>
            <person name="Schuhr C.A."/>
            <person name="Fellermeier M."/>
            <person name="Schramek N."/>
            <person name="Zenk M.H."/>
            <person name="Bacher A."/>
        </authorList>
    </citation>
    <scope>NUCLEOTIDE SEQUENCE [MRNA] OF 81-401</scope>
    <scope>CHARACTERIZATION</scope>
</reference>
<evidence type="ECO:0000250" key="1"/>
<evidence type="ECO:0000255" key="2"/>
<evidence type="ECO:0000305" key="3"/>
<accession>P93841</accession>
<comment type="function">
    <text>Catalyzes the phosphorylation of the position 2 hydroxy group of 4-diphosphocytidyl-2C-methyl-D-erythritol.</text>
</comment>
<comment type="catalytic activity">
    <reaction>
        <text>4-CDP-2-C-methyl-D-erythritol + ATP = 4-CDP-2-C-methyl-D-erythritol 2-phosphate + ADP + H(+)</text>
        <dbReference type="Rhea" id="RHEA:18437"/>
        <dbReference type="ChEBI" id="CHEBI:15378"/>
        <dbReference type="ChEBI" id="CHEBI:30616"/>
        <dbReference type="ChEBI" id="CHEBI:57823"/>
        <dbReference type="ChEBI" id="CHEBI:57919"/>
        <dbReference type="ChEBI" id="CHEBI:456216"/>
        <dbReference type="EC" id="2.7.1.148"/>
    </reaction>
</comment>
<comment type="cofactor">
    <cofactor>
        <name>Mg(2+)</name>
        <dbReference type="ChEBI" id="CHEBI:18420"/>
    </cofactor>
    <text>Divalent metal ions. Preferably magnesium.</text>
</comment>
<comment type="pathway">
    <text>Isoprenoid biosynthesis; isopentenyl diphosphate biosynthesis via DXP pathway; isopentenyl diphosphate from 1-deoxy-D-xylulose 5-phosphate: step 3/6.</text>
</comment>
<comment type="subcellular location">
    <subcellularLocation>
        <location evidence="1">Plastid</location>
        <location evidence="1">Chloroplast</location>
    </subcellularLocation>
    <subcellularLocation>
        <location>Plastid</location>
        <location>Chromoplast</location>
    </subcellularLocation>
</comment>
<comment type="similarity">
    <text evidence="3">Belongs to the GHMP kinase family. IspE subfamily.</text>
</comment>
<comment type="sequence caution" evidence="3">
    <conflict type="erroneous initiation">
        <sequence resource="EMBL-CDS" id="AAF76143"/>
    </conflict>
</comment>
<keyword id="KW-0067">ATP-binding</keyword>
<keyword id="KW-0150">Chloroplast</keyword>
<keyword id="KW-0957">Chromoplast</keyword>
<keyword id="KW-0414">Isoprene biosynthesis</keyword>
<keyword id="KW-0418">Kinase</keyword>
<keyword id="KW-0547">Nucleotide-binding</keyword>
<keyword id="KW-0934">Plastid</keyword>
<keyword id="KW-1185">Reference proteome</keyword>
<keyword id="KW-0808">Transferase</keyword>
<keyword id="KW-0809">Transit peptide</keyword>
<protein>
    <recommendedName>
        <fullName>4-diphosphocytidyl-2-C-methyl-D-erythritol kinase, chloroplastic/chromoplastic</fullName>
        <ecNumber>2.7.1.148</ecNumber>
    </recommendedName>
    <alternativeName>
        <fullName>4-(cytidine-5'-diphospho)-2-C-methyl-D-erythritol kinase</fullName>
        <shortName>CMK</shortName>
    </alternativeName>
    <alternativeName>
        <fullName>Ripening-associated protein pTOM41</fullName>
    </alternativeName>
</protein>
<organism>
    <name type="scientific">Solanum lycopersicum</name>
    <name type="common">Tomato</name>
    <name type="synonym">Lycopersicon esculentum</name>
    <dbReference type="NCBI Taxonomy" id="4081"/>
    <lineage>
        <taxon>Eukaryota</taxon>
        <taxon>Viridiplantae</taxon>
        <taxon>Streptophyta</taxon>
        <taxon>Embryophyta</taxon>
        <taxon>Tracheophyta</taxon>
        <taxon>Spermatophyta</taxon>
        <taxon>Magnoliopsida</taxon>
        <taxon>eudicotyledons</taxon>
        <taxon>Gunneridae</taxon>
        <taxon>Pentapetalae</taxon>
        <taxon>asterids</taxon>
        <taxon>lamiids</taxon>
        <taxon>Solanales</taxon>
        <taxon>Solanaceae</taxon>
        <taxon>Solanoideae</taxon>
        <taxon>Solaneae</taxon>
        <taxon>Solanum</taxon>
        <taxon>Solanum subgen. Lycopersicon</taxon>
    </lineage>
</organism>
<feature type="transit peptide" description="Chloroplast and chromoplast" evidence="2">
    <location>
        <begin position="1"/>
        <end position="88"/>
    </location>
</feature>
<feature type="chain" id="PRO_0000016480" description="4-diphosphocytidyl-2-C-methyl-D-erythritol kinase, chloroplastic/chromoplastic">
    <location>
        <begin position="89"/>
        <end position="401"/>
    </location>
</feature>
<feature type="binding site" evidence="2">
    <location>
        <begin position="181"/>
        <end position="191"/>
    </location>
    <ligand>
        <name>ATP</name>
        <dbReference type="ChEBI" id="CHEBI:30616"/>
    </ligand>
</feature>
<feature type="non-terminal residue">
    <location>
        <position position="1"/>
    </location>
</feature>